<reference key="1">
    <citation type="journal article" date="2010" name="Genome Biol.">
        <title>Structure and dynamics of the pan-genome of Streptococcus pneumoniae and closely related species.</title>
        <authorList>
            <person name="Donati C."/>
            <person name="Hiller N.L."/>
            <person name="Tettelin H."/>
            <person name="Muzzi A."/>
            <person name="Croucher N.J."/>
            <person name="Angiuoli S.V."/>
            <person name="Oggioni M."/>
            <person name="Dunning Hotopp J.C."/>
            <person name="Hu F.Z."/>
            <person name="Riley D.R."/>
            <person name="Covacci A."/>
            <person name="Mitchell T.J."/>
            <person name="Bentley S.D."/>
            <person name="Kilian M."/>
            <person name="Ehrlich G.D."/>
            <person name="Rappuoli R."/>
            <person name="Moxon E.R."/>
            <person name="Masignani V."/>
        </authorList>
    </citation>
    <scope>NUCLEOTIDE SEQUENCE [LARGE SCALE GENOMIC DNA]</scope>
    <source>
        <strain>Hungary19A-6</strain>
    </source>
</reference>
<sequence length="328" mass="37892">MAKDIRVLLYYLYTPIENAEQFAADHLAFCKSIGLKGRILVADEGINGTVSGDYETTQKYMDYVHSLPGMEDLWFKIDEENEQAFKKMFVRYKKEIVHLGLEDNDFDNDINPLETTGAYLSPKEFKEALLDKDTVVLDTRNDYEYDLGHFRGAIRPDIRNFRELPQWVRDNKEKFMDKRVVVYCTGGVRCEKFSGWMVREGYKDVGQLHGGIATYGKDPEVQGELWDGKMYVFDERIAVDVNHVNPTIVGKDWFDGTPCERYVNCGNPFCNRRILTSEENEDKYLRGCSHECRVHPRNRYVSKNELTQAEVIERLAAIGESLDQAATV</sequence>
<organism>
    <name type="scientific">Streptococcus pneumoniae (strain Hungary19A-6)</name>
    <dbReference type="NCBI Taxonomy" id="487214"/>
    <lineage>
        <taxon>Bacteria</taxon>
        <taxon>Bacillati</taxon>
        <taxon>Bacillota</taxon>
        <taxon>Bacilli</taxon>
        <taxon>Lactobacillales</taxon>
        <taxon>Streptococcaceae</taxon>
        <taxon>Streptococcus</taxon>
    </lineage>
</organism>
<evidence type="ECO:0000255" key="1">
    <source>
        <dbReference type="HAMAP-Rule" id="MF_00469"/>
    </source>
</evidence>
<comment type="function">
    <text evidence="1">Catalyzes oxygen-dependent 5-hydroxyuridine (ho5U) modification at position 34 in tRNAs.</text>
</comment>
<comment type="catalytic activity">
    <reaction evidence="1">
        <text>uridine(34) in tRNA + AH2 + O2 = 5-hydroxyuridine(34) in tRNA + A + H2O</text>
        <dbReference type="Rhea" id="RHEA:64224"/>
        <dbReference type="Rhea" id="RHEA-COMP:11727"/>
        <dbReference type="Rhea" id="RHEA-COMP:13381"/>
        <dbReference type="ChEBI" id="CHEBI:13193"/>
        <dbReference type="ChEBI" id="CHEBI:15377"/>
        <dbReference type="ChEBI" id="CHEBI:15379"/>
        <dbReference type="ChEBI" id="CHEBI:17499"/>
        <dbReference type="ChEBI" id="CHEBI:65315"/>
        <dbReference type="ChEBI" id="CHEBI:136877"/>
    </reaction>
</comment>
<comment type="similarity">
    <text evidence="1">Belongs to the TrhO family.</text>
</comment>
<accession>B1I7Z3</accession>
<protein>
    <recommendedName>
        <fullName evidence="1">tRNA uridine(34) hydroxylase</fullName>
        <ecNumber evidence="1">1.14.-.-</ecNumber>
    </recommendedName>
    <alternativeName>
        <fullName evidence="1">tRNA hydroxylation protein O</fullName>
    </alternativeName>
</protein>
<proteinExistence type="inferred from homology"/>
<keyword id="KW-0560">Oxidoreductase</keyword>
<keyword id="KW-0819">tRNA processing</keyword>
<name>TRHO_STRPI</name>
<gene>
    <name evidence="1" type="primary">trhO</name>
    <name type="ordered locus">SPH_0194</name>
</gene>
<feature type="chain" id="PRO_1000200382" description="tRNA uridine(34) hydroxylase">
    <location>
        <begin position="1"/>
        <end position="328"/>
    </location>
</feature>
<feature type="domain" description="Rhodanese" evidence="1">
    <location>
        <begin position="130"/>
        <end position="224"/>
    </location>
</feature>
<feature type="active site" description="Cysteine persulfide intermediate" evidence="1">
    <location>
        <position position="184"/>
    </location>
</feature>
<dbReference type="EC" id="1.14.-.-" evidence="1"/>
<dbReference type="EMBL" id="CP000936">
    <property type="protein sequence ID" value="ACA35942.1"/>
    <property type="molecule type" value="Genomic_DNA"/>
</dbReference>
<dbReference type="RefSeq" id="WP_001030014.1">
    <property type="nucleotide sequence ID" value="NC_010380.1"/>
</dbReference>
<dbReference type="SMR" id="B1I7Z3"/>
<dbReference type="KEGG" id="spv:SPH_0194"/>
<dbReference type="HOGENOM" id="CLU_038878_1_0_9"/>
<dbReference type="Proteomes" id="UP000002163">
    <property type="component" value="Chromosome"/>
</dbReference>
<dbReference type="GO" id="GO:0016705">
    <property type="term" value="F:oxidoreductase activity, acting on paired donors, with incorporation or reduction of molecular oxygen"/>
    <property type="evidence" value="ECO:0007669"/>
    <property type="project" value="UniProtKB-UniRule"/>
</dbReference>
<dbReference type="GO" id="GO:0006400">
    <property type="term" value="P:tRNA modification"/>
    <property type="evidence" value="ECO:0007669"/>
    <property type="project" value="UniProtKB-UniRule"/>
</dbReference>
<dbReference type="CDD" id="cd01518">
    <property type="entry name" value="RHOD_YceA"/>
    <property type="match status" value="1"/>
</dbReference>
<dbReference type="Gene3D" id="3.30.70.100">
    <property type="match status" value="1"/>
</dbReference>
<dbReference type="Gene3D" id="3.40.250.10">
    <property type="entry name" value="Rhodanese-like domain"/>
    <property type="match status" value="1"/>
</dbReference>
<dbReference type="HAMAP" id="MF_00469">
    <property type="entry name" value="TrhO"/>
    <property type="match status" value="1"/>
</dbReference>
<dbReference type="InterPro" id="IPR001763">
    <property type="entry name" value="Rhodanese-like_dom"/>
</dbReference>
<dbReference type="InterPro" id="IPR036873">
    <property type="entry name" value="Rhodanese-like_dom_sf"/>
</dbReference>
<dbReference type="InterPro" id="IPR022111">
    <property type="entry name" value="Rhodanese_C"/>
</dbReference>
<dbReference type="InterPro" id="IPR020936">
    <property type="entry name" value="TrhO"/>
</dbReference>
<dbReference type="InterPro" id="IPR040503">
    <property type="entry name" value="TRHO_N"/>
</dbReference>
<dbReference type="NCBIfam" id="NF001135">
    <property type="entry name" value="PRK00142.1-3"/>
    <property type="match status" value="1"/>
</dbReference>
<dbReference type="NCBIfam" id="NF001137">
    <property type="entry name" value="PRK00142.1-5"/>
    <property type="match status" value="1"/>
</dbReference>
<dbReference type="PANTHER" id="PTHR43268:SF3">
    <property type="entry name" value="RHODANESE-LIKE DOMAIN-CONTAINING PROTEIN 7-RELATED"/>
    <property type="match status" value="1"/>
</dbReference>
<dbReference type="PANTHER" id="PTHR43268">
    <property type="entry name" value="THIOSULFATE SULFURTRANSFERASE/RHODANESE-LIKE DOMAIN-CONTAINING PROTEIN 2"/>
    <property type="match status" value="1"/>
</dbReference>
<dbReference type="Pfam" id="PF00581">
    <property type="entry name" value="Rhodanese"/>
    <property type="match status" value="1"/>
</dbReference>
<dbReference type="Pfam" id="PF12368">
    <property type="entry name" value="Rhodanese_C"/>
    <property type="match status" value="1"/>
</dbReference>
<dbReference type="Pfam" id="PF17773">
    <property type="entry name" value="UPF0176_N"/>
    <property type="match status" value="1"/>
</dbReference>
<dbReference type="SMART" id="SM00450">
    <property type="entry name" value="RHOD"/>
    <property type="match status" value="1"/>
</dbReference>
<dbReference type="SUPFAM" id="SSF52821">
    <property type="entry name" value="Rhodanese/Cell cycle control phosphatase"/>
    <property type="match status" value="1"/>
</dbReference>
<dbReference type="PROSITE" id="PS50206">
    <property type="entry name" value="RHODANESE_3"/>
    <property type="match status" value="1"/>
</dbReference>